<evidence type="ECO:0000250" key="1"/>
<evidence type="ECO:0000255" key="2">
    <source>
        <dbReference type="PROSITE-ProRule" id="PRU01234"/>
    </source>
</evidence>
<evidence type="ECO:0000256" key="3">
    <source>
        <dbReference type="SAM" id="MobiDB-lite"/>
    </source>
</evidence>
<evidence type="ECO:0000305" key="4"/>
<accession>Q6BJM5</accession>
<feature type="chain" id="PRO_0000058114" description="Oxidation resistance protein 1">
    <location>
        <begin position="1"/>
        <end position="323"/>
    </location>
</feature>
<feature type="domain" description="TLDc" evidence="2">
    <location>
        <begin position="91"/>
        <end position="320"/>
    </location>
</feature>
<feature type="region of interest" description="Disordered" evidence="3">
    <location>
        <begin position="1"/>
        <end position="81"/>
    </location>
</feature>
<feature type="compositionally biased region" description="Polar residues" evidence="3">
    <location>
        <begin position="1"/>
        <end position="14"/>
    </location>
</feature>
<feature type="compositionally biased region" description="Polar residues" evidence="3">
    <location>
        <begin position="40"/>
        <end position="49"/>
    </location>
</feature>
<feature type="compositionally biased region" description="Basic and acidic residues" evidence="3">
    <location>
        <begin position="51"/>
        <end position="69"/>
    </location>
</feature>
<feature type="compositionally biased region" description="Low complexity" evidence="3">
    <location>
        <begin position="71"/>
        <end position="81"/>
    </location>
</feature>
<name>OXR1_DEBHA</name>
<gene>
    <name type="primary">OXR1</name>
    <name type="ordered locus">DEHA2G01320g</name>
</gene>
<organism>
    <name type="scientific">Debaryomyces hansenii (strain ATCC 36239 / CBS 767 / BCRC 21394 / JCM 1990 / NBRC 0083 / IGC 2968)</name>
    <name type="common">Yeast</name>
    <name type="synonym">Torulaspora hansenii</name>
    <dbReference type="NCBI Taxonomy" id="284592"/>
    <lineage>
        <taxon>Eukaryota</taxon>
        <taxon>Fungi</taxon>
        <taxon>Dikarya</taxon>
        <taxon>Ascomycota</taxon>
        <taxon>Saccharomycotina</taxon>
        <taxon>Pichiomycetes</taxon>
        <taxon>Debaryomycetaceae</taxon>
        <taxon>Debaryomyces</taxon>
    </lineage>
</organism>
<keyword id="KW-0496">Mitochondrion</keyword>
<keyword id="KW-1185">Reference proteome</keyword>
<comment type="function">
    <text evidence="1">May be involved in protection from oxidative damage.</text>
</comment>
<comment type="subcellular location">
    <subcellularLocation>
        <location evidence="1">Mitochondrion</location>
    </subcellularLocation>
</comment>
<comment type="similarity">
    <text evidence="4">Belongs to the OXR1 family.</text>
</comment>
<comment type="sequence caution" evidence="4">
    <conflict type="erroneous initiation">
        <sequence resource="EMBL-CDS" id="CAG90043"/>
    </conflict>
</comment>
<reference key="1">
    <citation type="journal article" date="2004" name="Nature">
        <title>Genome evolution in yeasts.</title>
        <authorList>
            <person name="Dujon B."/>
            <person name="Sherman D."/>
            <person name="Fischer G."/>
            <person name="Durrens P."/>
            <person name="Casaregola S."/>
            <person name="Lafontaine I."/>
            <person name="de Montigny J."/>
            <person name="Marck C."/>
            <person name="Neuveglise C."/>
            <person name="Talla E."/>
            <person name="Goffard N."/>
            <person name="Frangeul L."/>
            <person name="Aigle M."/>
            <person name="Anthouard V."/>
            <person name="Babour A."/>
            <person name="Barbe V."/>
            <person name="Barnay S."/>
            <person name="Blanchin S."/>
            <person name="Beckerich J.-M."/>
            <person name="Beyne E."/>
            <person name="Bleykasten C."/>
            <person name="Boisrame A."/>
            <person name="Boyer J."/>
            <person name="Cattolico L."/>
            <person name="Confanioleri F."/>
            <person name="de Daruvar A."/>
            <person name="Despons L."/>
            <person name="Fabre E."/>
            <person name="Fairhead C."/>
            <person name="Ferry-Dumazet H."/>
            <person name="Groppi A."/>
            <person name="Hantraye F."/>
            <person name="Hennequin C."/>
            <person name="Jauniaux N."/>
            <person name="Joyet P."/>
            <person name="Kachouri R."/>
            <person name="Kerrest A."/>
            <person name="Koszul R."/>
            <person name="Lemaire M."/>
            <person name="Lesur I."/>
            <person name="Ma L."/>
            <person name="Muller H."/>
            <person name="Nicaud J.-M."/>
            <person name="Nikolski M."/>
            <person name="Oztas S."/>
            <person name="Ozier-Kalogeropoulos O."/>
            <person name="Pellenz S."/>
            <person name="Potier S."/>
            <person name="Richard G.-F."/>
            <person name="Straub M.-L."/>
            <person name="Suleau A."/>
            <person name="Swennen D."/>
            <person name="Tekaia F."/>
            <person name="Wesolowski-Louvel M."/>
            <person name="Westhof E."/>
            <person name="Wirth B."/>
            <person name="Zeniou-Meyer M."/>
            <person name="Zivanovic Y."/>
            <person name="Bolotin-Fukuhara M."/>
            <person name="Thierry A."/>
            <person name="Bouchier C."/>
            <person name="Caudron B."/>
            <person name="Scarpelli C."/>
            <person name="Gaillardin C."/>
            <person name="Weissenbach J."/>
            <person name="Wincker P."/>
            <person name="Souciet J.-L."/>
        </authorList>
    </citation>
    <scope>NUCLEOTIDE SEQUENCE [LARGE SCALE GENOMIC DNA]</scope>
    <source>
        <strain>ATCC 36239 / CBS 767 / BCRC 21394 / JCM 1990 / NBRC 0083 / IGC 2968</strain>
    </source>
</reference>
<protein>
    <recommendedName>
        <fullName>Oxidation resistance protein 1</fullName>
    </recommendedName>
</protein>
<proteinExistence type="inferred from homology"/>
<dbReference type="EMBL" id="CR382139">
    <property type="protein sequence ID" value="CAG90043.2"/>
    <property type="status" value="ALT_INIT"/>
    <property type="molecule type" value="Genomic_DNA"/>
</dbReference>
<dbReference type="RefSeq" id="XP_461596.2">
    <property type="nucleotide sequence ID" value="XM_461596.2"/>
</dbReference>
<dbReference type="SMR" id="Q6BJM5"/>
<dbReference type="FunCoup" id="Q6BJM5">
    <property type="interactions" value="19"/>
</dbReference>
<dbReference type="STRING" id="284592.Q6BJM5"/>
<dbReference type="GeneID" id="2904458"/>
<dbReference type="KEGG" id="dha:DEHA2G01320g"/>
<dbReference type="eggNOG" id="KOG2372">
    <property type="taxonomic scope" value="Eukaryota"/>
</dbReference>
<dbReference type="HOGENOM" id="CLU_029204_0_0_1"/>
<dbReference type="InParanoid" id="Q6BJM5"/>
<dbReference type="OrthoDB" id="26679at2759"/>
<dbReference type="Proteomes" id="UP000000599">
    <property type="component" value="Chromosome G"/>
</dbReference>
<dbReference type="GO" id="GO:0005739">
    <property type="term" value="C:mitochondrion"/>
    <property type="evidence" value="ECO:0007669"/>
    <property type="project" value="UniProtKB-SubCell"/>
</dbReference>
<dbReference type="GO" id="GO:0005634">
    <property type="term" value="C:nucleus"/>
    <property type="evidence" value="ECO:0007669"/>
    <property type="project" value="TreeGrafter"/>
</dbReference>
<dbReference type="GO" id="GO:0006979">
    <property type="term" value="P:response to oxidative stress"/>
    <property type="evidence" value="ECO:0007669"/>
    <property type="project" value="TreeGrafter"/>
</dbReference>
<dbReference type="InterPro" id="IPR006571">
    <property type="entry name" value="TLDc_dom"/>
</dbReference>
<dbReference type="PANTHER" id="PTHR23354:SF62">
    <property type="entry name" value="MUSTARD, ISOFORM V"/>
    <property type="match status" value="1"/>
</dbReference>
<dbReference type="PANTHER" id="PTHR23354">
    <property type="entry name" value="NUCLEOLAR PROTEIN 7/ESTROGEN RECEPTOR COACTIVATOR-RELATED"/>
    <property type="match status" value="1"/>
</dbReference>
<dbReference type="Pfam" id="PF07534">
    <property type="entry name" value="TLD"/>
    <property type="match status" value="1"/>
</dbReference>
<dbReference type="SMART" id="SM00584">
    <property type="entry name" value="TLDc"/>
    <property type="match status" value="1"/>
</dbReference>
<dbReference type="PROSITE" id="PS51886">
    <property type="entry name" value="TLDC"/>
    <property type="match status" value="1"/>
</dbReference>
<sequence>MVTDKTNASSSSLVDTPADETEVQPPINRRPTFLDRLMRRQTSPSSMEYSESDKKKDGPMENEQSKGVRESSLPPLSQLSLKGYKSSTKRRLLDDELASNIRNLLPARLQLFDEWDLVYSLEQHGVSLNTLYQRSNPDYQLSQLRKNKPEVGYGDSVISSMMSGNVNSMRERRRPQGYVLIIKDENNSKFGCFVNEHLRPMDQKRYYGNGECFLWKSELFTPSPSNSNSEEDISSHLATPQIRFKAFMYTGINDNIIYSNHDFIAIGSSKGQNGLWIDRSLYNGVSYSCDTFGNEILNSNSGDAKIGKFKIMGLELWRVGTLE</sequence>